<reference key="1">
    <citation type="journal article" date="2004" name="Nature">
        <title>Sequence and comparative analysis of the chicken genome provide unique perspectives on vertebrate evolution.</title>
        <authorList>
            <person name="Hillier L.W."/>
            <person name="Miller W."/>
            <person name="Birney E."/>
            <person name="Warren W."/>
            <person name="Hardison R.C."/>
            <person name="Ponting C.P."/>
            <person name="Bork P."/>
            <person name="Burt D.W."/>
            <person name="Groenen M.A.M."/>
            <person name="Delany M.E."/>
            <person name="Dodgson J.B."/>
            <person name="Chinwalla A.T."/>
            <person name="Cliften P.F."/>
            <person name="Clifton S.W."/>
            <person name="Delehaunty K.D."/>
            <person name="Fronick C."/>
            <person name="Fulton R.S."/>
            <person name="Graves T.A."/>
            <person name="Kremitzki C."/>
            <person name="Layman D."/>
            <person name="Magrini V."/>
            <person name="McPherson J.D."/>
            <person name="Miner T.L."/>
            <person name="Minx P."/>
            <person name="Nash W.E."/>
            <person name="Nhan M.N."/>
            <person name="Nelson J.O."/>
            <person name="Oddy L.G."/>
            <person name="Pohl C.S."/>
            <person name="Randall-Maher J."/>
            <person name="Smith S.M."/>
            <person name="Wallis J.W."/>
            <person name="Yang S.-P."/>
            <person name="Romanov M.N."/>
            <person name="Rondelli C.M."/>
            <person name="Paton B."/>
            <person name="Smith J."/>
            <person name="Morrice D."/>
            <person name="Daniels L."/>
            <person name="Tempest H.G."/>
            <person name="Robertson L."/>
            <person name="Masabanda J.S."/>
            <person name="Griffin D.K."/>
            <person name="Vignal A."/>
            <person name="Fillon V."/>
            <person name="Jacobbson L."/>
            <person name="Kerje S."/>
            <person name="Andersson L."/>
            <person name="Crooijmans R.P."/>
            <person name="Aerts J."/>
            <person name="van der Poel J.J."/>
            <person name="Ellegren H."/>
            <person name="Caldwell R.B."/>
            <person name="Hubbard S.J."/>
            <person name="Grafham D.V."/>
            <person name="Kierzek A.M."/>
            <person name="McLaren S.R."/>
            <person name="Overton I.M."/>
            <person name="Arakawa H."/>
            <person name="Beattie K.J."/>
            <person name="Bezzubov Y."/>
            <person name="Boardman P.E."/>
            <person name="Bonfield J.K."/>
            <person name="Croning M.D.R."/>
            <person name="Davies R.M."/>
            <person name="Francis M.D."/>
            <person name="Humphray S.J."/>
            <person name="Scott C.E."/>
            <person name="Taylor R.G."/>
            <person name="Tickle C."/>
            <person name="Brown W.R.A."/>
            <person name="Rogers J."/>
            <person name="Buerstedde J.-M."/>
            <person name="Wilson S.A."/>
            <person name="Stubbs L."/>
            <person name="Ovcharenko I."/>
            <person name="Gordon L."/>
            <person name="Lucas S."/>
            <person name="Miller M.M."/>
            <person name="Inoko H."/>
            <person name="Shiina T."/>
            <person name="Kaufman J."/>
            <person name="Salomonsen J."/>
            <person name="Skjoedt K."/>
            <person name="Wong G.K.-S."/>
            <person name="Wang J."/>
            <person name="Liu B."/>
            <person name="Wang J."/>
            <person name="Yu J."/>
            <person name="Yang H."/>
            <person name="Nefedov M."/>
            <person name="Koriabine M."/>
            <person name="Dejong P.J."/>
            <person name="Goodstadt L."/>
            <person name="Webber C."/>
            <person name="Dickens N.J."/>
            <person name="Letunic I."/>
            <person name="Suyama M."/>
            <person name="Torrents D."/>
            <person name="von Mering C."/>
            <person name="Zdobnov E.M."/>
            <person name="Makova K."/>
            <person name="Nekrutenko A."/>
            <person name="Elnitski L."/>
            <person name="Eswara P."/>
            <person name="King D.C."/>
            <person name="Yang S.-P."/>
            <person name="Tyekucheva S."/>
            <person name="Radakrishnan A."/>
            <person name="Harris R.S."/>
            <person name="Chiaromonte F."/>
            <person name="Taylor J."/>
            <person name="He J."/>
            <person name="Rijnkels M."/>
            <person name="Griffiths-Jones S."/>
            <person name="Ureta-Vidal A."/>
            <person name="Hoffman M.M."/>
            <person name="Severin J."/>
            <person name="Searle S.M.J."/>
            <person name="Law A.S."/>
            <person name="Speed D."/>
            <person name="Waddington D."/>
            <person name="Cheng Z."/>
            <person name="Tuzun E."/>
            <person name="Eichler E."/>
            <person name="Bao Z."/>
            <person name="Flicek P."/>
            <person name="Shteynberg D.D."/>
            <person name="Brent M.R."/>
            <person name="Bye J.M."/>
            <person name="Huckle E.J."/>
            <person name="Chatterji S."/>
            <person name="Dewey C."/>
            <person name="Pachter L."/>
            <person name="Kouranov A."/>
            <person name="Mourelatos Z."/>
            <person name="Hatzigeorgiou A.G."/>
            <person name="Paterson A.H."/>
            <person name="Ivarie R."/>
            <person name="Brandstrom M."/>
            <person name="Axelsson E."/>
            <person name="Backstrom N."/>
            <person name="Berlin S."/>
            <person name="Webster M.T."/>
            <person name="Pourquie O."/>
            <person name="Reymond A."/>
            <person name="Ucla C."/>
            <person name="Antonarakis S.E."/>
            <person name="Long M."/>
            <person name="Emerson J.J."/>
            <person name="Betran E."/>
            <person name="Dupanloup I."/>
            <person name="Kaessmann H."/>
            <person name="Hinrichs A.S."/>
            <person name="Bejerano G."/>
            <person name="Furey T.S."/>
            <person name="Harte R.A."/>
            <person name="Raney B."/>
            <person name="Siepel A."/>
            <person name="Kent W.J."/>
            <person name="Haussler D."/>
            <person name="Eyras E."/>
            <person name="Castelo R."/>
            <person name="Abril J.F."/>
            <person name="Castellano S."/>
            <person name="Camara F."/>
            <person name="Parra G."/>
            <person name="Guigo R."/>
            <person name="Bourque G."/>
            <person name="Tesler G."/>
            <person name="Pevzner P.A."/>
            <person name="Smit A."/>
            <person name="Fulton L.A."/>
            <person name="Mardis E.R."/>
            <person name="Wilson R.K."/>
        </authorList>
    </citation>
    <scope>NUCLEOTIDE SEQUENCE [LARGE SCALE GENOMIC DNA]</scope>
    <source>
        <strain>Red jungle fowl</strain>
    </source>
</reference>
<reference key="2">
    <citation type="journal article" date="1985" name="Ann. N. Y. Acad. Sci.">
        <title>The structure of the chicken alpha 2 collagen gene.</title>
        <authorList>
            <person name="Boedtker H."/>
            <person name="Finer M."/>
            <person name="Aho S."/>
        </authorList>
    </citation>
    <scope>NUCLEOTIDE SEQUENCE [GENOMIC DNA] OF 1-245; 263-449 AND 467-1363</scope>
</reference>
<reference key="3">
    <citation type="journal article" date="1983" name="Nucleic Acids Res.">
        <title>Chick pro alpha 2 (I) collagen gene: exon location and coding potential for the prepropeptide.</title>
        <authorList>
            <person name="Tate V.E."/>
            <person name="Finer M.H."/>
            <person name="Boedtker H."/>
            <person name="Doty P."/>
        </authorList>
    </citation>
    <scope>NUCLEOTIDE SEQUENCE [GENOMIC DNA] OF 1-89</scope>
</reference>
<reference key="4">
    <citation type="journal article" date="1981" name="Proc. Natl. Acad. Sci. U.S.A.">
        <title>Structure of the promoter for chicken alpha 2 type I collagen gene.</title>
        <authorList>
            <person name="Vogeli G."/>
            <person name="Ohkubo H."/>
            <person name="Sobel M.E."/>
            <person name="Yamada Y."/>
            <person name="Pastan I."/>
            <person name="de Crombrugghe B."/>
        </authorList>
    </citation>
    <scope>NUCLEOTIDE SEQUENCE [GENOMIC DNA] OF 1-14</scope>
</reference>
<reference key="5">
    <citation type="journal article" date="1984" name="Nucleic Acids Res.">
        <title>Location of the 11 bp exon in the chicken pro alpha 2(I) collagen gene.</title>
        <authorList>
            <person name="Aho S."/>
            <person name="Tate V.E."/>
            <person name="Boedtker H."/>
        </authorList>
    </citation>
    <scope>NUCLEOTIDE SEQUENCE [GENOMIC DNA] OF 1-33</scope>
</reference>
<reference key="6">
    <citation type="journal article" date="1987" name="Gene">
        <title>Construction and characterization of cDNA clones encoding the 5' end of the chicken pro alpha 1(I) collagen mRNA.</title>
        <authorList>
            <person name="Finer M.H."/>
            <person name="Boedtker H."/>
            <person name="Doty P."/>
        </authorList>
    </citation>
    <scope>NUCLEOTIDE SEQUENCE [MRNA] OF 1-79</scope>
</reference>
<reference key="7">
    <citation type="journal article" date="1970" name="Biochem. Biophys. Res. Commun.">
        <title>The order of the CNBr peptides from the alpha 2 chain of collagen.</title>
        <authorList>
            <person name="Vuust J."/>
            <person name="Lane J.M."/>
            <person name="Fietzek P.P."/>
            <person name="Miller E.J."/>
            <person name="Piez K.A."/>
        </authorList>
    </citation>
    <scope>PROTEIN SEQUENCE OF 74-92; 264-449 AND 1089-1171</scope>
</reference>
<reference key="8">
    <citation type="journal article" date="1981" name="Nature">
        <title>Structure of the pro alpha 2 (I) collagen gene.</title>
        <authorList>
            <person name="Wozney J."/>
            <person name="Hanahan D."/>
            <person name="Tate V.E."/>
            <person name="Boedtker H."/>
            <person name="Doty P."/>
        </authorList>
    </citation>
    <scope>NUCLEOTIDE SEQUENCE [GENOMIC DNA] OF 74-91; 264-449 AND 1089-1170</scope>
</reference>
<reference key="9">
    <citation type="journal article" date="1970" name="Biochemistry">
        <title>Amino acid sequence of cyanogen bromide peptides from the amino-terminal region of chick skicollagen.</title>
        <authorList>
            <person name="Kang A.H."/>
            <person name="Gross J."/>
        </authorList>
    </citation>
    <scope>PROTEIN SEQUENCE OF 78-92</scope>
    <scope>ALLYSINE AT LYS-83</scope>
    <scope>PYROGLUTAMATE FORMATION AT GLN-78</scope>
    <source>
        <tissue>Skin</tissue>
    </source>
</reference>
<reference key="10">
    <citation type="journal article" date="1969" name="Biochemistry">
        <title>Characterization of the cyanogen bromide peptides from the alpha-2 chain of chick skin collagen.</title>
        <authorList>
            <person name="Kang A.H."/>
            <person name="Igarashi S."/>
            <person name="Gross J."/>
        </authorList>
    </citation>
    <scope>PROTEIN SEQUENCE OF 78-92 AND 416-449</scope>
    <scope>PYROGLUTAMATE FORMATION AT GLN-78</scope>
    <source>
        <tissue>Skin</tissue>
    </source>
</reference>
<reference key="11">
    <citation type="journal article" date="1969" name="Biochemistry">
        <title>Isolation and characterization of the peptides derived from the alpha 2 chain of chick bone collagen after cyanogen bromide cleavage.</title>
        <authorList>
            <person name="Lane J.M."/>
            <person name="Miller E.J."/>
        </authorList>
    </citation>
    <scope>PROTEIN SEQUENCE OF 78-92 AND 416-449</scope>
    <scope>PYROGLUTAMATE FORMATION AT GLN-78</scope>
    <source>
        <tissue>Bone</tissue>
    </source>
</reference>
<reference key="12">
    <citation type="journal article" date="1970" name="Biochem. Biophys. Res. Commun.">
        <title>Renaturation and ordering by electron microscopy of the cyanogen bromide peptides from the alpha 2 chain of chick skin collagen.</title>
        <authorList>
            <person name="Igarashi S."/>
            <person name="Kang A.H."/>
            <person name="Gross J."/>
        </authorList>
    </citation>
    <scope>PROTEIN SEQUENCE OF 78-95 AND 416-446</scope>
</reference>
<reference key="13">
    <citation type="journal article" date="1971" name="Biochemistry">
        <title>Comparative studies on the amino acid sequence of the alpha 2-CB2 peptides from chick and rat skin collagens.</title>
        <authorList>
            <person name="Highberger J.H."/>
            <person name="Kang A.H."/>
            <person name="Gross J."/>
        </authorList>
    </citation>
    <scope>PROTEIN SEQUENCE OF 417-445</scope>
    <scope>HYDROXYLATION AT PRO-440 AND PRO-443</scope>
    <source>
        <tissue>Skin</tissue>
    </source>
</reference>
<reference key="14">
    <citation type="journal article" date="1978" name="Proc. Natl. Acad. Sci. U.S.A.">
        <title>Construction and characterization of a 2.5-kilobase procollagen clone.</title>
        <authorList>
            <person name="Lehrach H."/>
            <person name="Frischauf A.-M."/>
            <person name="Hanahan D."/>
            <person name="Wozney J."/>
            <person name="Fuller F."/>
            <person name="Crkvenjakov R."/>
            <person name="Boedtker H."/>
            <person name="Doty P."/>
        </authorList>
    </citation>
    <scope>NUCLEOTIDE SEQUENCE [GENOMIC DNA] OF 567-588</scope>
</reference>
<reference key="15">
    <citation type="journal article" date="1981" name="Biochemistry">
        <title>Sequence determination and analysis of the 3' region of chicken pro-alpha 1(I) and pro-alpha 2(I) collagen messenger ribonucleic acids including the carboxy-terminal propeptide sequences.</title>
        <authorList>
            <person name="Fuller F."/>
            <person name="Boedtker H."/>
        </authorList>
    </citation>
    <scope>NUCLEOTIDE SEQUENCE [MRNA] OF 903-1363</scope>
</reference>
<reference key="16">
    <citation type="journal article" date="1981" name="J. Biol. Chem.">
        <title>The exon/intron structure of the 3'-region of the pro alpha 2(I) collagen gene.</title>
        <authorList>
            <person name="Dickson L.A."/>
            <person name="Ninomiya Y."/>
            <person name="Bernard M.P."/>
            <person name="Pesciotta D.M."/>
            <person name="Parsons J."/>
            <person name="Green G."/>
            <person name="Eikenberry E.F."/>
            <person name="de Crombrugghe B."/>
            <person name="Vogeli G."/>
            <person name="Pastan I."/>
            <person name="Fietzek P.P."/>
            <person name="Olsen B.R."/>
        </authorList>
    </citation>
    <scope>NUCLEOTIDE SEQUENCE [GENOMIC DNA] OF 999-1170 AND 1235-1363</scope>
</reference>
<reference key="17">
    <citation type="journal article" date="1980" name="Cell">
        <title>Correlation between splicing sites within an intron and their sequence complementarity with U1 RNA.</title>
        <authorList>
            <person name="Avvedimento V.E."/>
            <person name="Vogeli G."/>
            <person name="Yamada Y."/>
            <person name="Maizel J.V. Jr."/>
            <person name="Pastan I."/>
            <person name="de Crombrugghe B."/>
        </authorList>
    </citation>
    <scope>NUCLEOTIDE SEQUENCE [GENOMIC DNA] OF 933-955 AND 969-981</scope>
</reference>
<reference key="18">
    <citation type="journal article" date="1980" name="Cell">
        <title>The collagen gene: evidence for its evolutionary assembly by amplification of a DNA segment containing an exon of 54 bp.</title>
        <authorList>
            <person name="Yamada Y."/>
            <person name="Avvedimento V.E."/>
            <person name="Mudryj M."/>
            <person name="Ohkubo H."/>
            <person name="Vogeli G."/>
            <person name="Irani M."/>
            <person name="Pastan I."/>
            <person name="de Crombrugghe B."/>
        </authorList>
    </citation>
    <scope>NUCLEOTIDE SEQUENCE [GENOMIC DNA] OF 126-161; 468-518 AND 927-955</scope>
</reference>
<proteinExistence type="evidence at protein level"/>
<accession>P02467</accession>
<accession>F1P0H9</accession>
<accession>P87491</accession>
<accession>P87492</accession>
<accession>Q90758</accession>
<accession>Q90792</accession>
<accession>Q90795</accession>
<accession>Q90797</accession>
<accession>Q92014</accession>
<name>CO1A2_CHICK</name>
<comment type="function">
    <text>Type I collagen is a member of group I collagen (fibrillar forming collagen).</text>
</comment>
<comment type="subunit">
    <text>Trimers of one alpha 2(I) and two alpha 1(I) chains.</text>
</comment>
<comment type="subcellular location">
    <subcellularLocation>
        <location evidence="6">Secreted</location>
        <location evidence="6">Extracellular space</location>
        <location evidence="6">Extracellular matrix</location>
    </subcellularLocation>
</comment>
<comment type="tissue specificity">
    <text>Forms the fibrils of tendon, ligaments and bones. In bones the fibrils are mineralized with calcium hydroxyapatite.</text>
</comment>
<comment type="domain">
    <text evidence="1">The C-terminal propeptide, also known as COLFI domain, have crucial roles in tissue growth and repair by controlling both the intracellular assembly of procollagen molecules and the extracellular assembly of collagen fibrils. It binds a calcium ion which is essential for its function.</text>
</comment>
<comment type="PTM">
    <text evidence="9">Prolines at the third position of the tripeptide repeating unit (G-X-Y) are hydroxylated in some or all of the chains.</text>
</comment>
<comment type="PTM">
    <text>The N-terminus of the mature protein is blocked.</text>
</comment>
<comment type="similarity">
    <text evidence="6">Belongs to the fibrillar collagen family.</text>
</comment>
<keyword id="KW-0106">Calcium</keyword>
<keyword id="KW-0176">Collagen</keyword>
<keyword id="KW-0903">Direct protein sequencing</keyword>
<keyword id="KW-1015">Disulfide bond</keyword>
<keyword id="KW-0272">Extracellular matrix</keyword>
<keyword id="KW-0325">Glycoprotein</keyword>
<keyword id="KW-0379">Hydroxylation</keyword>
<keyword id="KW-0479">Metal-binding</keyword>
<keyword id="KW-0873">Pyrrolidone carboxylic acid</keyword>
<keyword id="KW-1185">Reference proteome</keyword>
<keyword id="KW-0677">Repeat</keyword>
<keyword id="KW-0964">Secreted</keyword>
<keyword id="KW-0732">Signal</keyword>
<sequence>MLSFVDTRILLLLAVTSYLATSQHLFQASAGRKGPRGDKGPQGERGPPGPPGRDGEDGPPGPPGPPGPPGLGGNFAAQYDPSKAADFGPGPMGLMGPRGPPGASGPPGPPGFQGVPGEPGEPGQTGPQGPRGPPGPPGKAGEDGHPGKPGRPGERGVAGPQGARGFPGTPGLPGFKGIRGHNGLDGQKGQPGTPGTKGEPGAPGENGTPGQPGARGLPGERGRIGAPGPAGARGSDGSAGPTGPAGPIGAAGPPGFPGAPGAKGEIGPAGNVGPTGPAGPRGEIGLPGSSGPVGPPGNPGANGLPGAKGAAGLPGVAGAPGLPGPRGIPGPPGPAGPSGARGLVGEPGPAGAKGESGNKGEPGAAGPPGPPGPSGEEGKRGSNGEPGSAGPPGPAGLRGVPGSRGLPGADGRAGVMGPAGNRGASGPVGAKGPNGDAGRPGEPGLMGPRGLPGQPGSPGPAGKEGPVGFPGADGRVGPIGPAGNRGEPGNIGFPGPKGPTGEPGKPGEKGNVGLAGPRGAPGPEGNNGAQGPPGVTGNQGAKGETGPAGPPGFQGLPGPSGPAGEAGKPGERGLHGEFGVPGPAGPRGERGLPGESGAVGPAGPIGSRGPSGPPGPDGNKGEPGNVGPAGAPGPAGPGGIPGERGVAGVPGGKGEKGAPGLRGDTGATGRDGARGLPGAIGAPGPAGGAGDRGEGGPAGPAGPAGARGIPGERGEPGPVGPSGFAGPPGAAGQPGAKGERGPKGPKGETGPTGAIGPIGASGPPGPVGAAGPAGPRGDAGPPGMTGFPGAAGRVGPPGPAGITGPPGPPGPAGKDGPRGLRGDVGPVGRTGEQGIAGPPGFAGEKGPSGEAGAAGPPGTPGPQGILGAPGILGLPGSRGERGLPGIAGATGEPGPLGVSGPPGARGPSGPVGSPGPNGAPGEAGRDGNPGNDGPPGRDGAPGFKGERGAPGNPGPSGALGAPGPHGQVGPSGKPGNRGDPGPVGPVGPAGAFGPRGLAGPQGPRGEKGEPGDKGHRGLPGLKGHNGLQGLPGLAGQHGDQGPPGNNGPAGPRGPPGPSGPPGKDGRNGLPGPIGPAGVRGSHGSQGPAGPPGPPGPPGPPGPNGGGYEVGFDAEYYRADQPSLRPKDYEVDATLKTLNNQIETLLTPEGSKKNPARTCRDLRLSHPEWSSGFYWIDPNQGCTADAIRAYCDFATGETCIHASLEDIPTKTWYVSKNPKDKKHIWFGETINGGTQFEYNGEGVTTKDMATQLAFMRLLANHASQNITYHCKNSIAYMDEETGNLKKAVILQGSNDVELRAEGNSRFTFSVLVDGCSKKNNKWGKTIIEYRTNKPSRLPILDIAPLDIGGADQEFGLHIGPVCFK</sequence>
<organism>
    <name type="scientific">Gallus gallus</name>
    <name type="common">Chicken</name>
    <dbReference type="NCBI Taxonomy" id="9031"/>
    <lineage>
        <taxon>Eukaryota</taxon>
        <taxon>Metazoa</taxon>
        <taxon>Chordata</taxon>
        <taxon>Craniata</taxon>
        <taxon>Vertebrata</taxon>
        <taxon>Euteleostomi</taxon>
        <taxon>Archelosauria</taxon>
        <taxon>Archosauria</taxon>
        <taxon>Dinosauria</taxon>
        <taxon>Saurischia</taxon>
        <taxon>Theropoda</taxon>
        <taxon>Coelurosauria</taxon>
        <taxon>Aves</taxon>
        <taxon>Neognathae</taxon>
        <taxon>Galloanserae</taxon>
        <taxon>Galliformes</taxon>
        <taxon>Phasianidae</taxon>
        <taxon>Phasianinae</taxon>
        <taxon>Gallus</taxon>
    </lineage>
</organism>
<gene>
    <name type="primary">COL1A2</name>
</gene>
<protein>
    <recommendedName>
        <fullName>Collagen alpha-2(I) chain</fullName>
    </recommendedName>
    <alternativeName>
        <fullName>Alpha-2 type I collagen</fullName>
    </alternativeName>
</protein>
<dbReference type="EMBL" id="AADN04000096">
    <property type="status" value="NOT_ANNOTATED_CDS"/>
    <property type="molecule type" value="Genomic_DNA"/>
</dbReference>
<dbReference type="EMBL" id="M25963">
    <property type="protein sequence ID" value="AAA69960.1"/>
    <property type="molecule type" value="Genomic_DNA"/>
</dbReference>
<dbReference type="EMBL" id="M25956">
    <property type="protein sequence ID" value="AAA69960.1"/>
    <property type="status" value="JOINED"/>
    <property type="molecule type" value="Genomic_DNA"/>
</dbReference>
<dbReference type="EMBL" id="M25959">
    <property type="protein sequence ID" value="AAA69960.1"/>
    <property type="status" value="JOINED"/>
    <property type="molecule type" value="Genomic_DNA"/>
</dbReference>
<dbReference type="EMBL" id="M25961">
    <property type="protein sequence ID" value="AAA69960.1"/>
    <property type="status" value="JOINED"/>
    <property type="molecule type" value="Genomic_DNA"/>
</dbReference>
<dbReference type="EMBL" id="M25962">
    <property type="protein sequence ID" value="AAA69960.1"/>
    <property type="status" value="JOINED"/>
    <property type="molecule type" value="Genomic_DNA"/>
</dbReference>
<dbReference type="EMBL" id="M25965">
    <property type="protein sequence ID" value="AAA69961.1"/>
    <property type="molecule type" value="Genomic_DNA"/>
</dbReference>
<dbReference type="EMBL" id="M25964">
    <property type="protein sequence ID" value="AAA69961.1"/>
    <property type="status" value="JOINED"/>
    <property type="molecule type" value="Genomic_DNA"/>
</dbReference>
<dbReference type="EMBL" id="M25984">
    <property type="protein sequence ID" value="AAA69962.1"/>
    <property type="molecule type" value="Genomic_DNA"/>
</dbReference>
<dbReference type="EMBL" id="M25957">
    <property type="protein sequence ID" value="AAA69962.1"/>
    <property type="status" value="JOINED"/>
    <property type="molecule type" value="Genomic_DNA"/>
</dbReference>
<dbReference type="EMBL" id="M25966">
    <property type="protein sequence ID" value="AAA69962.1"/>
    <property type="status" value="JOINED"/>
    <property type="molecule type" value="Genomic_DNA"/>
</dbReference>
<dbReference type="EMBL" id="M25967">
    <property type="protein sequence ID" value="AAA69962.1"/>
    <property type="status" value="JOINED"/>
    <property type="molecule type" value="Genomic_DNA"/>
</dbReference>
<dbReference type="EMBL" id="M25969">
    <property type="protein sequence ID" value="AAA69962.1"/>
    <property type="status" value="JOINED"/>
    <property type="molecule type" value="Genomic_DNA"/>
</dbReference>
<dbReference type="EMBL" id="M25970">
    <property type="protein sequence ID" value="AAA69962.1"/>
    <property type="status" value="JOINED"/>
    <property type="molecule type" value="Genomic_DNA"/>
</dbReference>
<dbReference type="EMBL" id="M25971">
    <property type="protein sequence ID" value="AAA69962.1"/>
    <property type="status" value="JOINED"/>
    <property type="molecule type" value="Genomic_DNA"/>
</dbReference>
<dbReference type="EMBL" id="M25972">
    <property type="protein sequence ID" value="AAA69962.1"/>
    <property type="status" value="JOINED"/>
    <property type="molecule type" value="Genomic_DNA"/>
</dbReference>
<dbReference type="EMBL" id="M25973">
    <property type="protein sequence ID" value="AAA69962.1"/>
    <property type="status" value="JOINED"/>
    <property type="molecule type" value="Genomic_DNA"/>
</dbReference>
<dbReference type="EMBL" id="M25974">
    <property type="protein sequence ID" value="AAA69962.1"/>
    <property type="status" value="JOINED"/>
    <property type="molecule type" value="Genomic_DNA"/>
</dbReference>
<dbReference type="EMBL" id="M25976">
    <property type="protein sequence ID" value="AAA69962.1"/>
    <property type="status" value="JOINED"/>
    <property type="molecule type" value="Genomic_DNA"/>
</dbReference>
<dbReference type="EMBL" id="M25977">
    <property type="protein sequence ID" value="AAA69962.1"/>
    <property type="status" value="JOINED"/>
    <property type="molecule type" value="Genomic_DNA"/>
</dbReference>
<dbReference type="EMBL" id="M25978">
    <property type="protein sequence ID" value="AAA69962.1"/>
    <property type="status" value="JOINED"/>
    <property type="molecule type" value="Genomic_DNA"/>
</dbReference>
<dbReference type="EMBL" id="M25979">
    <property type="protein sequence ID" value="AAA69962.1"/>
    <property type="status" value="JOINED"/>
    <property type="molecule type" value="Genomic_DNA"/>
</dbReference>
<dbReference type="EMBL" id="M25980">
    <property type="protein sequence ID" value="AAA69962.1"/>
    <property type="status" value="JOINED"/>
    <property type="molecule type" value="Genomic_DNA"/>
</dbReference>
<dbReference type="EMBL" id="M25981">
    <property type="protein sequence ID" value="AAA69962.1"/>
    <property type="status" value="JOINED"/>
    <property type="molecule type" value="Genomic_DNA"/>
</dbReference>
<dbReference type="EMBL" id="M25982">
    <property type="protein sequence ID" value="AAA69962.1"/>
    <property type="status" value="JOINED"/>
    <property type="molecule type" value="Genomic_DNA"/>
</dbReference>
<dbReference type="EMBL" id="M25983">
    <property type="protein sequence ID" value="AAA69962.1"/>
    <property type="status" value="JOINED"/>
    <property type="molecule type" value="Genomic_DNA"/>
</dbReference>
<dbReference type="EMBL" id="J00826">
    <property type="protein sequence ID" value="AAA51611.1"/>
    <property type="molecule type" value="Genomic_DNA"/>
</dbReference>
<dbReference type="EMBL" id="J00821">
    <property type="protein sequence ID" value="AAA51611.1"/>
    <property type="status" value="JOINED"/>
    <property type="molecule type" value="Genomic_DNA"/>
</dbReference>
<dbReference type="EMBL" id="K00792">
    <property type="protein sequence ID" value="AAA51611.1"/>
    <property type="status" value="JOINED"/>
    <property type="molecule type" value="Genomic_DNA"/>
</dbReference>
<dbReference type="EMBL" id="J00830">
    <property type="protein sequence ID" value="AAA51613.1"/>
    <property type="molecule type" value="Genomic_DNA"/>
</dbReference>
<dbReference type="EMBL" id="J00829">
    <property type="protein sequence ID" value="AAA51613.1"/>
    <property type="status" value="JOINED"/>
    <property type="molecule type" value="Genomic_DNA"/>
</dbReference>
<dbReference type="EMBL" id="J00837">
    <property type="protein sequence ID" value="AAA51614.1"/>
    <property type="molecule type" value="Genomic_DNA"/>
</dbReference>
<dbReference type="EMBL" id="J00812">
    <property type="protein sequence ID" value="AAA51615.1"/>
    <property type="molecule type" value="Genomic_DNA"/>
</dbReference>
<dbReference type="EMBL" id="J00811">
    <property type="protein sequence ID" value="AAA51615.1"/>
    <property type="status" value="JOINED"/>
    <property type="molecule type" value="Genomic_DNA"/>
</dbReference>
<dbReference type="EMBL" id="J00814">
    <property type="protein sequence ID" value="AAA51615.1"/>
    <property type="status" value="JOINED"/>
    <property type="molecule type" value="Genomic_DNA"/>
</dbReference>
<dbReference type="EMBL" id="J00815">
    <property type="protein sequence ID" value="AAA51615.1"/>
    <property type="status" value="JOINED"/>
    <property type="molecule type" value="Genomic_DNA"/>
</dbReference>
<dbReference type="EMBL" id="X02657">
    <property type="protein sequence ID" value="CAA26493.1"/>
    <property type="molecule type" value="mRNA"/>
</dbReference>
<dbReference type="EMBL" id="K00794">
    <property type="status" value="NOT_ANNOTATED_CDS"/>
    <property type="molecule type" value="Genomic_DNA"/>
</dbReference>
<dbReference type="EMBL" id="V00390">
    <property type="protein sequence ID" value="CAA23688.1"/>
    <property type="molecule type" value="mRNA"/>
</dbReference>
<dbReference type="EMBL" id="M17608">
    <property type="protein sequence ID" value="AAA48673.1"/>
    <property type="molecule type" value="mRNA"/>
</dbReference>
<dbReference type="EMBL" id="M10581">
    <property type="protein sequence ID" value="AAA48637.1"/>
    <property type="molecule type" value="Genomic_DNA"/>
</dbReference>
<dbReference type="EMBL" id="M10540">
    <property type="protein sequence ID" value="AAA48638.1"/>
    <property type="molecule type" value="Genomic_DNA"/>
</dbReference>
<dbReference type="EMBL" id="J00828">
    <property type="protein sequence ID" value="AAA51612.1"/>
    <property type="molecule type" value="Genomic_DNA"/>
</dbReference>
<dbReference type="EMBL" id="J00827">
    <property type="protein sequence ID" value="AAA51612.1"/>
    <property type="status" value="JOINED"/>
    <property type="molecule type" value="Genomic_DNA"/>
</dbReference>
<dbReference type="EMBL" id="J00832">
    <property type="protein sequence ID" value="AAD22117.1"/>
    <property type="molecule type" value="Genomic_DNA"/>
</dbReference>
<dbReference type="EMBL" id="J00831">
    <property type="protein sequence ID" value="AAD22117.1"/>
    <property type="status" value="JOINED"/>
    <property type="molecule type" value="Genomic_DNA"/>
</dbReference>
<dbReference type="EMBL" id="J00833">
    <property type="status" value="NOT_ANNOTATED_CDS"/>
    <property type="molecule type" value="Genomic_DNA"/>
</dbReference>
<dbReference type="EMBL" id="J00822">
    <property type="status" value="NOT_ANNOTATED_CDS"/>
    <property type="molecule type" value="Genomic_DNA"/>
</dbReference>
<dbReference type="PIR" id="I50173">
    <property type="entry name" value="I50173"/>
</dbReference>
<dbReference type="PIR" id="I50206">
    <property type="entry name" value="CGCH2S"/>
</dbReference>
<dbReference type="PIR" id="S10847">
    <property type="entry name" value="S10847"/>
</dbReference>
<dbReference type="SMR" id="P02467"/>
<dbReference type="ComplexPortal" id="CPX-3102">
    <property type="entry name" value="Collagen type I trimer"/>
</dbReference>
<dbReference type="FunCoup" id="P02467">
    <property type="interactions" value="158"/>
</dbReference>
<dbReference type="STRING" id="9031.ENSGALP00000015687"/>
<dbReference type="GlyCosmos" id="P02467">
    <property type="glycosylation" value="2 sites, No reported glycans"/>
</dbReference>
<dbReference type="GlyGen" id="P02467">
    <property type="glycosylation" value="9 sites"/>
</dbReference>
<dbReference type="PaxDb" id="9031-ENSGALP00000015687"/>
<dbReference type="VEuPathDB" id="HostDB:geneid_396243"/>
<dbReference type="eggNOG" id="KOG3544">
    <property type="taxonomic scope" value="Eukaryota"/>
</dbReference>
<dbReference type="InParanoid" id="P02467"/>
<dbReference type="OrthoDB" id="8939548at2759"/>
<dbReference type="PhylomeDB" id="P02467"/>
<dbReference type="TreeFam" id="TF344135"/>
<dbReference type="Proteomes" id="UP000000539">
    <property type="component" value="Unassembled WGS sequence"/>
</dbReference>
<dbReference type="GO" id="GO:0005584">
    <property type="term" value="C:collagen type I trimer"/>
    <property type="evidence" value="ECO:0000318"/>
    <property type="project" value="GO_Central"/>
</dbReference>
<dbReference type="GO" id="GO:0062023">
    <property type="term" value="C:collagen-containing extracellular matrix"/>
    <property type="evidence" value="ECO:0000318"/>
    <property type="project" value="GO_Central"/>
</dbReference>
<dbReference type="GO" id="GO:0005615">
    <property type="term" value="C:extracellular space"/>
    <property type="evidence" value="ECO:0000318"/>
    <property type="project" value="GO_Central"/>
</dbReference>
<dbReference type="GO" id="GO:0005583">
    <property type="term" value="C:fibrillar collagen trimer"/>
    <property type="evidence" value="ECO:0000314"/>
    <property type="project" value="AgBase"/>
</dbReference>
<dbReference type="GO" id="GO:0030020">
    <property type="term" value="F:extracellular matrix structural constituent conferring tensile strength"/>
    <property type="evidence" value="ECO:0000318"/>
    <property type="project" value="GO_Central"/>
</dbReference>
<dbReference type="GO" id="GO:0046872">
    <property type="term" value="F:metal ion binding"/>
    <property type="evidence" value="ECO:0007669"/>
    <property type="project" value="UniProtKB-KW"/>
</dbReference>
<dbReference type="FunFam" id="2.60.120.1000:FF:000001">
    <property type="entry name" value="Collagen alpha-1 type I chain"/>
    <property type="match status" value="1"/>
</dbReference>
<dbReference type="Gene3D" id="2.60.120.1000">
    <property type="match status" value="1"/>
</dbReference>
<dbReference type="InterPro" id="IPR008160">
    <property type="entry name" value="Collagen"/>
</dbReference>
<dbReference type="InterPro" id="IPR050149">
    <property type="entry name" value="Collagen_superfamily"/>
</dbReference>
<dbReference type="InterPro" id="IPR000885">
    <property type="entry name" value="Fib_collagen_C"/>
</dbReference>
<dbReference type="PANTHER" id="PTHR24023">
    <property type="entry name" value="COLLAGEN ALPHA"/>
    <property type="match status" value="1"/>
</dbReference>
<dbReference type="PANTHER" id="PTHR24023:SF1082">
    <property type="entry name" value="COLLAGEN TRIPLE HELIX REPEAT"/>
    <property type="match status" value="1"/>
</dbReference>
<dbReference type="Pfam" id="PF01410">
    <property type="entry name" value="COLFI"/>
    <property type="match status" value="1"/>
</dbReference>
<dbReference type="Pfam" id="PF01391">
    <property type="entry name" value="Collagen"/>
    <property type="match status" value="9"/>
</dbReference>
<dbReference type="SMART" id="SM00038">
    <property type="entry name" value="COLFI"/>
    <property type="match status" value="1"/>
</dbReference>
<dbReference type="PROSITE" id="PS51461">
    <property type="entry name" value="NC1_FIB"/>
    <property type="match status" value="1"/>
</dbReference>
<feature type="signal peptide" evidence="2">
    <location>
        <begin position="1"/>
        <end position="22"/>
    </location>
</feature>
<feature type="propeptide" id="PRO_0000005815" description="N-terminal propeptide" evidence="3">
    <location>
        <begin position="23"/>
        <end position="77"/>
    </location>
</feature>
<feature type="chain" id="PRO_0000005816" description="Collagen alpha-2(I) chain">
    <location>
        <begin position="78"/>
        <end position="1117"/>
    </location>
</feature>
<feature type="propeptide" id="PRO_0000005817" description="C-terminal propeptide" evidence="3">
    <location>
        <begin position="1118"/>
        <end position="1363"/>
    </location>
</feature>
<feature type="domain" description="Fibrillar collagen NC1" evidence="6">
    <location>
        <begin position="1128"/>
        <end position="1363"/>
    </location>
</feature>
<feature type="region of interest" description="Disordered" evidence="7">
    <location>
        <begin position="28"/>
        <end position="1110"/>
    </location>
</feature>
<feature type="compositionally biased region" description="Pro residues" evidence="7">
    <location>
        <begin position="59"/>
        <end position="69"/>
    </location>
</feature>
<feature type="compositionally biased region" description="Low complexity" evidence="7">
    <location>
        <begin position="88"/>
        <end position="97"/>
    </location>
</feature>
<feature type="compositionally biased region" description="Pro residues" evidence="7">
    <location>
        <begin position="98"/>
        <end position="110"/>
    </location>
</feature>
<feature type="compositionally biased region" description="Low complexity" evidence="7">
    <location>
        <begin position="112"/>
        <end position="128"/>
    </location>
</feature>
<feature type="compositionally biased region" description="Basic and acidic residues" evidence="7">
    <location>
        <begin position="140"/>
        <end position="154"/>
    </location>
</feature>
<feature type="compositionally biased region" description="Low complexity" evidence="7">
    <location>
        <begin position="224"/>
        <end position="263"/>
    </location>
</feature>
<feature type="compositionally biased region" description="Low complexity" evidence="7">
    <location>
        <begin position="299"/>
        <end position="320"/>
    </location>
</feature>
<feature type="compositionally biased region" description="Pro residues" evidence="7">
    <location>
        <begin position="322"/>
        <end position="335"/>
    </location>
</feature>
<feature type="compositionally biased region" description="Low complexity" evidence="7">
    <location>
        <begin position="601"/>
        <end position="610"/>
    </location>
</feature>
<feature type="compositionally biased region" description="Low complexity" evidence="7">
    <location>
        <begin position="674"/>
        <end position="683"/>
    </location>
</feature>
<feature type="compositionally biased region" description="Gly residues" evidence="7">
    <location>
        <begin position="684"/>
        <end position="699"/>
    </location>
</feature>
<feature type="compositionally biased region" description="Low complexity" evidence="7">
    <location>
        <begin position="721"/>
        <end position="736"/>
    </location>
</feature>
<feature type="compositionally biased region" description="Basic and acidic residues" evidence="7">
    <location>
        <begin position="737"/>
        <end position="746"/>
    </location>
</feature>
<feature type="compositionally biased region" description="Low complexity" evidence="7">
    <location>
        <begin position="748"/>
        <end position="794"/>
    </location>
</feature>
<feature type="compositionally biased region" description="Low complexity" evidence="7">
    <location>
        <begin position="842"/>
        <end position="875"/>
    </location>
</feature>
<feature type="compositionally biased region" description="Low complexity" evidence="7">
    <location>
        <begin position="898"/>
        <end position="931"/>
    </location>
</feature>
<feature type="compositionally biased region" description="Low complexity" evidence="7">
    <location>
        <begin position="955"/>
        <end position="965"/>
    </location>
</feature>
<feature type="compositionally biased region" description="Low complexity" evidence="7">
    <location>
        <begin position="986"/>
        <end position="995"/>
    </location>
</feature>
<feature type="compositionally biased region" description="Basic and acidic residues" evidence="7">
    <location>
        <begin position="1004"/>
        <end position="1015"/>
    </location>
</feature>
<feature type="compositionally biased region" description="Low complexity" evidence="7">
    <location>
        <begin position="1036"/>
        <end position="1049"/>
    </location>
</feature>
<feature type="compositionally biased region" description="Pro residues" evidence="7">
    <location>
        <begin position="1051"/>
        <end position="1060"/>
    </location>
</feature>
<feature type="compositionally biased region" description="Pro residues" evidence="7">
    <location>
        <begin position="1088"/>
        <end position="1102"/>
    </location>
</feature>
<feature type="binding site" evidence="4">
    <location>
        <position position="1176"/>
    </location>
    <ligand>
        <name>Ca(2+)</name>
        <dbReference type="ChEBI" id="CHEBI:29108"/>
    </ligand>
</feature>
<feature type="binding site" evidence="4">
    <location>
        <position position="1178"/>
    </location>
    <ligand>
        <name>Ca(2+)</name>
        <dbReference type="ChEBI" id="CHEBI:29108"/>
    </ligand>
</feature>
<feature type="binding site" evidence="4">
    <location>
        <position position="1179"/>
    </location>
    <ligand>
        <name>Ca(2+)</name>
        <dbReference type="ChEBI" id="CHEBI:29108"/>
    </ligand>
</feature>
<feature type="binding site" evidence="4">
    <location>
        <position position="1181"/>
    </location>
    <ligand>
        <name>Ca(2+)</name>
        <dbReference type="ChEBI" id="CHEBI:29108"/>
    </ligand>
</feature>
<feature type="binding site" evidence="4">
    <location>
        <position position="1184"/>
    </location>
    <ligand>
        <name>Ca(2+)</name>
        <dbReference type="ChEBI" id="CHEBI:29108"/>
    </ligand>
</feature>
<feature type="modified residue" description="Pyrrolidone carboxylic acid" evidence="3">
    <location>
        <position position="23"/>
    </location>
</feature>
<feature type="modified residue" description="Pyrrolidone carboxylic acid" evidence="8 11 12">
    <location>
        <position position="78"/>
    </location>
</feature>
<feature type="modified residue" description="Allysine" evidence="8">
    <location>
        <position position="83"/>
    </location>
</feature>
<feature type="modified residue" description="5-hydroxylysine; alternate" evidence="3">
    <location>
        <position position="176"/>
    </location>
</feature>
<feature type="modified residue" description="4-hydroxyproline" evidence="9">
    <location>
        <position position="440"/>
    </location>
</feature>
<feature type="modified residue" description="4-hydroxyproline" evidence="9">
    <location>
        <position position="443"/>
    </location>
</feature>
<feature type="glycosylation site" description="O-linked (Gal...) hydroxylysine; alternate" evidence="3">
    <location>
        <position position="176"/>
    </location>
</feature>
<feature type="glycosylation site" description="N-linked (GlcNAc...) asparagine" evidence="5">
    <location>
        <position position="1264"/>
    </location>
</feature>
<feature type="disulfide bond" evidence="6">
    <location>
        <begin position="1158"/>
        <end position="1190"/>
    </location>
</feature>
<feature type="disulfide bond" evidence="6">
    <location>
        <begin position="1198"/>
        <end position="1361"/>
    </location>
</feature>
<feature type="disulfide bond" evidence="6">
    <location>
        <begin position="1269"/>
        <end position="1314"/>
    </location>
</feature>
<feature type="sequence conflict" description="In Ref. 13; AA sequence." evidence="10" ref="13">
    <original>VGA</original>
    <variation>AGV</variation>
    <location>
        <begin position="428"/>
        <end position="430"/>
    </location>
</feature>
<feature type="sequence conflict" description="In Ref. 17; AAA48638." evidence="10" ref="17">
    <original>P</original>
    <variation>L</variation>
    <location>
        <position position="974"/>
    </location>
</feature>
<feature type="sequence conflict" description="In Ref. 16; AAA51615." evidence="10" ref="16">
    <original>P</original>
    <variation>H</variation>
    <location>
        <position position="1010"/>
    </location>
</feature>
<feature type="sequence conflict" description="In Ref. 16; AAA51615." evidence="10" ref="16">
    <original>P</original>
    <variation>H</variation>
    <location>
        <position position="1055"/>
    </location>
</feature>
<feature type="sequence conflict" description="In Ref. 16; AAA51615." evidence="10" ref="16">
    <original>P</original>
    <variation>H</variation>
    <location>
        <position position="1061"/>
    </location>
</feature>
<feature type="sequence conflict" description="In Ref. 16; AAA51615." evidence="10" ref="16">
    <original>S</original>
    <variation>P</variation>
    <location>
        <position position="1262"/>
    </location>
</feature>
<evidence type="ECO:0000250" key="1"/>
<evidence type="ECO:0000250" key="2">
    <source>
        <dbReference type="UniProtKB" id="P02466"/>
    </source>
</evidence>
<evidence type="ECO:0000250" key="3">
    <source>
        <dbReference type="UniProtKB" id="P08123"/>
    </source>
</evidence>
<evidence type="ECO:0000250" key="4">
    <source>
        <dbReference type="UniProtKB" id="Q03692"/>
    </source>
</evidence>
<evidence type="ECO:0000255" key="5"/>
<evidence type="ECO:0000255" key="6">
    <source>
        <dbReference type="PROSITE-ProRule" id="PRU00793"/>
    </source>
</evidence>
<evidence type="ECO:0000256" key="7">
    <source>
        <dbReference type="SAM" id="MobiDB-lite"/>
    </source>
</evidence>
<evidence type="ECO:0000269" key="8">
    <source>
    </source>
</evidence>
<evidence type="ECO:0000269" key="9">
    <source>
    </source>
</evidence>
<evidence type="ECO:0000305" key="10"/>
<evidence type="ECO:0000305" key="11">
    <source>
    </source>
</evidence>
<evidence type="ECO:0000305" key="12">
    <source>
    </source>
</evidence>